<feature type="chain" id="PRO_0000207216" description="Leucyl/phenylalanyl-tRNA--protein transferase">
    <location>
        <begin position="1"/>
        <end position="234"/>
    </location>
</feature>
<reference key="1">
    <citation type="journal article" date="2004" name="Nat. Biotechnol.">
        <title>The genome sequence of the anaerobic, sulfate-reducing bacterium Desulfovibrio vulgaris Hildenborough.</title>
        <authorList>
            <person name="Heidelberg J.F."/>
            <person name="Seshadri R."/>
            <person name="Haveman S.A."/>
            <person name="Hemme C.L."/>
            <person name="Paulsen I.T."/>
            <person name="Kolonay J.F."/>
            <person name="Eisen J.A."/>
            <person name="Ward N.L."/>
            <person name="Methe B.A."/>
            <person name="Brinkac L.M."/>
            <person name="Daugherty S.C."/>
            <person name="DeBoy R.T."/>
            <person name="Dodson R.J."/>
            <person name="Durkin A.S."/>
            <person name="Madupu R."/>
            <person name="Nelson W.C."/>
            <person name="Sullivan S.A."/>
            <person name="Fouts D.E."/>
            <person name="Haft D.H."/>
            <person name="Selengut J."/>
            <person name="Peterson J.D."/>
            <person name="Davidsen T.M."/>
            <person name="Zafar N."/>
            <person name="Zhou L."/>
            <person name="Radune D."/>
            <person name="Dimitrov G."/>
            <person name="Hance M."/>
            <person name="Tran K."/>
            <person name="Khouri H.M."/>
            <person name="Gill J."/>
            <person name="Utterback T.R."/>
            <person name="Feldblyum T.V."/>
            <person name="Wall J.D."/>
            <person name="Voordouw G."/>
            <person name="Fraser C.M."/>
        </authorList>
    </citation>
    <scope>NUCLEOTIDE SEQUENCE [LARGE SCALE GENOMIC DNA]</scope>
    <source>
        <strain>ATCC 29579 / DSM 644 / CCUG 34227 / NCIMB 8303 / VKM B-1760 / Hildenborough</strain>
    </source>
</reference>
<name>LFTR_NITV2</name>
<proteinExistence type="inferred from homology"/>
<evidence type="ECO:0000255" key="1">
    <source>
        <dbReference type="HAMAP-Rule" id="MF_00688"/>
    </source>
</evidence>
<protein>
    <recommendedName>
        <fullName evidence="1">Leucyl/phenylalanyl-tRNA--protein transferase</fullName>
        <ecNumber evidence="1">2.3.2.6</ecNumber>
    </recommendedName>
    <alternativeName>
        <fullName evidence="1">L/F-transferase</fullName>
    </alternativeName>
    <alternativeName>
        <fullName evidence="1">Leucyltransferase</fullName>
    </alternativeName>
    <alternativeName>
        <fullName evidence="1">Phenyalanyltransferase</fullName>
    </alternativeName>
</protein>
<gene>
    <name evidence="1" type="primary">aat</name>
    <name type="ordered locus">DVU_1603</name>
</gene>
<organism>
    <name type="scientific">Nitratidesulfovibrio vulgaris (strain ATCC 29579 / DSM 644 / CCUG 34227 / NCIMB 8303 / VKM B-1760 / Hildenborough)</name>
    <name type="common">Desulfovibrio vulgaris</name>
    <dbReference type="NCBI Taxonomy" id="882"/>
    <lineage>
        <taxon>Bacteria</taxon>
        <taxon>Pseudomonadati</taxon>
        <taxon>Thermodesulfobacteriota</taxon>
        <taxon>Desulfovibrionia</taxon>
        <taxon>Desulfovibrionales</taxon>
        <taxon>Desulfovibrionaceae</taxon>
        <taxon>Nitratidesulfovibrio</taxon>
    </lineage>
</organism>
<comment type="function">
    <text evidence="1">Functions in the N-end rule pathway of protein degradation where it conjugates Leu, Phe and, less efficiently, Met from aminoacyl-tRNAs to the N-termini of proteins containing an N-terminal arginine or lysine.</text>
</comment>
<comment type="catalytic activity">
    <reaction evidence="1">
        <text>N-terminal L-lysyl-[protein] + L-leucyl-tRNA(Leu) = N-terminal L-leucyl-L-lysyl-[protein] + tRNA(Leu) + H(+)</text>
        <dbReference type="Rhea" id="RHEA:12340"/>
        <dbReference type="Rhea" id="RHEA-COMP:9613"/>
        <dbReference type="Rhea" id="RHEA-COMP:9622"/>
        <dbReference type="Rhea" id="RHEA-COMP:12670"/>
        <dbReference type="Rhea" id="RHEA-COMP:12671"/>
        <dbReference type="ChEBI" id="CHEBI:15378"/>
        <dbReference type="ChEBI" id="CHEBI:65249"/>
        <dbReference type="ChEBI" id="CHEBI:78442"/>
        <dbReference type="ChEBI" id="CHEBI:78494"/>
        <dbReference type="ChEBI" id="CHEBI:133043"/>
        <dbReference type="EC" id="2.3.2.6"/>
    </reaction>
</comment>
<comment type="catalytic activity">
    <reaction evidence="1">
        <text>N-terminal L-arginyl-[protein] + L-leucyl-tRNA(Leu) = N-terminal L-leucyl-L-arginyl-[protein] + tRNA(Leu) + H(+)</text>
        <dbReference type="Rhea" id="RHEA:50416"/>
        <dbReference type="Rhea" id="RHEA-COMP:9613"/>
        <dbReference type="Rhea" id="RHEA-COMP:9622"/>
        <dbReference type="Rhea" id="RHEA-COMP:12672"/>
        <dbReference type="Rhea" id="RHEA-COMP:12673"/>
        <dbReference type="ChEBI" id="CHEBI:15378"/>
        <dbReference type="ChEBI" id="CHEBI:64719"/>
        <dbReference type="ChEBI" id="CHEBI:78442"/>
        <dbReference type="ChEBI" id="CHEBI:78494"/>
        <dbReference type="ChEBI" id="CHEBI:133044"/>
        <dbReference type="EC" id="2.3.2.6"/>
    </reaction>
</comment>
<comment type="catalytic activity">
    <reaction evidence="1">
        <text>L-phenylalanyl-tRNA(Phe) + an N-terminal L-alpha-aminoacyl-[protein] = an N-terminal L-phenylalanyl-L-alpha-aminoacyl-[protein] + tRNA(Phe)</text>
        <dbReference type="Rhea" id="RHEA:43632"/>
        <dbReference type="Rhea" id="RHEA-COMP:9668"/>
        <dbReference type="Rhea" id="RHEA-COMP:9699"/>
        <dbReference type="Rhea" id="RHEA-COMP:10636"/>
        <dbReference type="Rhea" id="RHEA-COMP:10637"/>
        <dbReference type="ChEBI" id="CHEBI:78442"/>
        <dbReference type="ChEBI" id="CHEBI:78531"/>
        <dbReference type="ChEBI" id="CHEBI:78597"/>
        <dbReference type="ChEBI" id="CHEBI:83561"/>
        <dbReference type="EC" id="2.3.2.6"/>
    </reaction>
</comment>
<comment type="subcellular location">
    <subcellularLocation>
        <location evidence="1">Cytoplasm</location>
    </subcellularLocation>
</comment>
<comment type="similarity">
    <text evidence="1">Belongs to the L/F-transferase family.</text>
</comment>
<dbReference type="EC" id="2.3.2.6" evidence="1"/>
<dbReference type="EMBL" id="AE017285">
    <property type="protein sequence ID" value="AAS96081.1"/>
    <property type="molecule type" value="Genomic_DNA"/>
</dbReference>
<dbReference type="RefSeq" id="WP_010938894.1">
    <property type="nucleotide sequence ID" value="NC_002937.3"/>
</dbReference>
<dbReference type="RefSeq" id="YP_010822.1">
    <property type="nucleotide sequence ID" value="NC_002937.3"/>
</dbReference>
<dbReference type="SMR" id="Q72BN2"/>
<dbReference type="STRING" id="882.DVU_1603"/>
<dbReference type="PaxDb" id="882-DVU_1603"/>
<dbReference type="EnsemblBacteria" id="AAS96081">
    <property type="protein sequence ID" value="AAS96081"/>
    <property type="gene ID" value="DVU_1603"/>
</dbReference>
<dbReference type="KEGG" id="dvu:DVU_1603"/>
<dbReference type="PATRIC" id="fig|882.5.peg.1478"/>
<dbReference type="eggNOG" id="COG2360">
    <property type="taxonomic scope" value="Bacteria"/>
</dbReference>
<dbReference type="HOGENOM" id="CLU_075045_0_0_7"/>
<dbReference type="OrthoDB" id="9790282at2"/>
<dbReference type="PhylomeDB" id="Q72BN2"/>
<dbReference type="Proteomes" id="UP000002194">
    <property type="component" value="Chromosome"/>
</dbReference>
<dbReference type="GO" id="GO:0005737">
    <property type="term" value="C:cytoplasm"/>
    <property type="evidence" value="ECO:0007669"/>
    <property type="project" value="UniProtKB-SubCell"/>
</dbReference>
<dbReference type="GO" id="GO:0008914">
    <property type="term" value="F:leucyl-tRNA--protein transferase activity"/>
    <property type="evidence" value="ECO:0007669"/>
    <property type="project" value="UniProtKB-UniRule"/>
</dbReference>
<dbReference type="GO" id="GO:0030163">
    <property type="term" value="P:protein catabolic process"/>
    <property type="evidence" value="ECO:0007669"/>
    <property type="project" value="UniProtKB-UniRule"/>
</dbReference>
<dbReference type="FunFam" id="3.30.70.3550:FF:000001">
    <property type="entry name" value="Leucyl/phenylalanyl-tRNA--protein transferase"/>
    <property type="match status" value="1"/>
</dbReference>
<dbReference type="Gene3D" id="3.40.630.70">
    <property type="entry name" value="Leucyl/phenylalanyl-tRNA-protein transferase, C-terminal domain"/>
    <property type="match status" value="1"/>
</dbReference>
<dbReference type="Gene3D" id="3.30.70.3550">
    <property type="entry name" value="Leucyl/phenylalanyl-tRNA-protein transferase, N-terminal domain"/>
    <property type="match status" value="1"/>
</dbReference>
<dbReference type="HAMAP" id="MF_00688">
    <property type="entry name" value="Leu_Phe_trans"/>
    <property type="match status" value="1"/>
</dbReference>
<dbReference type="InterPro" id="IPR016181">
    <property type="entry name" value="Acyl_CoA_acyltransferase"/>
</dbReference>
<dbReference type="InterPro" id="IPR004616">
    <property type="entry name" value="Leu/Phe-tRNA_Trfase"/>
</dbReference>
<dbReference type="InterPro" id="IPR042203">
    <property type="entry name" value="Leu/Phe-tRNA_Trfase_C"/>
</dbReference>
<dbReference type="InterPro" id="IPR042221">
    <property type="entry name" value="Leu/Phe-tRNA_Trfase_N"/>
</dbReference>
<dbReference type="NCBIfam" id="TIGR00667">
    <property type="entry name" value="aat"/>
    <property type="match status" value="1"/>
</dbReference>
<dbReference type="PANTHER" id="PTHR30098">
    <property type="entry name" value="LEUCYL/PHENYLALANYL-TRNA--PROTEIN TRANSFERASE"/>
    <property type="match status" value="1"/>
</dbReference>
<dbReference type="PANTHER" id="PTHR30098:SF2">
    <property type="entry name" value="LEUCYL_PHENYLALANYL-TRNA--PROTEIN TRANSFERASE"/>
    <property type="match status" value="1"/>
</dbReference>
<dbReference type="Pfam" id="PF03588">
    <property type="entry name" value="Leu_Phe_trans"/>
    <property type="match status" value="1"/>
</dbReference>
<dbReference type="SUPFAM" id="SSF55729">
    <property type="entry name" value="Acyl-CoA N-acyltransferases (Nat)"/>
    <property type="match status" value="1"/>
</dbReference>
<keyword id="KW-0012">Acyltransferase</keyword>
<keyword id="KW-0963">Cytoplasm</keyword>
<keyword id="KW-1185">Reference proteome</keyword>
<keyword id="KW-0808">Transferase</keyword>
<accession>Q72BN2</accession>
<sequence>MRLYLLPDDACIFPDVGEAGPDGLLAIGGDLTPERLLRAYEEGIFPWYGPGDPILWWSPDPRCVLPLDALHVPRRLMRTVRAKTFEVRLDTAFADVLEQCAATPRPGQGGTWLVPEMRAAYTRLHHLGHAHSVEAWYGGRLVGGLYGVALGGGFFGESMFHAMPDASKVAFVWLARLLVSWGFRFVDCQQTTSHMLRFGAVEMPRTDFLACLHDATRQPSRIGRWRLPQDFVPW</sequence>